<proteinExistence type="inferred from homology"/>
<sequence>MFKVDLNSDLGESFGAYKMGMDEEILKFVSSVNVACGFHAGDPCVMDKTLNLAKQNGVCIGAHPSYPDLLGFGRRNMQISFEEAKNYALYQLGALFGFAKAKGMKIQHFKAHGALYNMAAIDENLALALCEAVASFDENIIFLGLSNSAMNEAAKKKGLRYANEVFADRAYNDDGTLVSRKLEGALIHDENLAIKRVIKMIKESKVTSINGKEIDLKADSICVHGDNIKALEFVKKIKENLEKEQIQICALENFI</sequence>
<protein>
    <recommendedName>
        <fullName evidence="1">5-oxoprolinase subunit A</fullName>
        <shortName evidence="1">5-OPase subunit A</shortName>
        <ecNumber evidence="1">3.5.2.9</ecNumber>
    </recommendedName>
    <alternativeName>
        <fullName evidence="1">5-oxoprolinase (ATP-hydrolyzing) subunit A</fullName>
    </alternativeName>
</protein>
<name>PXPA_CAMJ8</name>
<dbReference type="EC" id="3.5.2.9" evidence="1"/>
<dbReference type="EMBL" id="CP000814">
    <property type="protein sequence ID" value="ABV53038.1"/>
    <property type="molecule type" value="Genomic_DNA"/>
</dbReference>
<dbReference type="RefSeq" id="WP_002867082.1">
    <property type="nucleotide sequence ID" value="NC_009839.1"/>
</dbReference>
<dbReference type="SMR" id="A8FNK1"/>
<dbReference type="KEGG" id="cju:C8J_1440"/>
<dbReference type="HOGENOM" id="CLU_069535_0_0_7"/>
<dbReference type="GO" id="GO:0017168">
    <property type="term" value="F:5-oxoprolinase (ATP-hydrolyzing) activity"/>
    <property type="evidence" value="ECO:0007669"/>
    <property type="project" value="UniProtKB-UniRule"/>
</dbReference>
<dbReference type="GO" id="GO:0005524">
    <property type="term" value="F:ATP binding"/>
    <property type="evidence" value="ECO:0007669"/>
    <property type="project" value="UniProtKB-UniRule"/>
</dbReference>
<dbReference type="GO" id="GO:0005975">
    <property type="term" value="P:carbohydrate metabolic process"/>
    <property type="evidence" value="ECO:0007669"/>
    <property type="project" value="InterPro"/>
</dbReference>
<dbReference type="CDD" id="cd10787">
    <property type="entry name" value="LamB_YcsF_like"/>
    <property type="match status" value="1"/>
</dbReference>
<dbReference type="Gene3D" id="3.20.20.370">
    <property type="entry name" value="Glycoside hydrolase/deacetylase"/>
    <property type="match status" value="1"/>
</dbReference>
<dbReference type="HAMAP" id="MF_00691">
    <property type="entry name" value="PxpA"/>
    <property type="match status" value="1"/>
</dbReference>
<dbReference type="InterPro" id="IPR011330">
    <property type="entry name" value="Glyco_hydro/deAcase_b/a-brl"/>
</dbReference>
<dbReference type="InterPro" id="IPR005501">
    <property type="entry name" value="LamB/YcsF/PxpA-like"/>
</dbReference>
<dbReference type="NCBIfam" id="NF003814">
    <property type="entry name" value="PRK05406.1-3"/>
    <property type="match status" value="1"/>
</dbReference>
<dbReference type="NCBIfam" id="NF003816">
    <property type="entry name" value="PRK05406.1-5"/>
    <property type="match status" value="1"/>
</dbReference>
<dbReference type="PANTHER" id="PTHR30292:SF0">
    <property type="entry name" value="5-OXOPROLINASE SUBUNIT A"/>
    <property type="match status" value="1"/>
</dbReference>
<dbReference type="PANTHER" id="PTHR30292">
    <property type="entry name" value="UNCHARACTERIZED PROTEIN YBGL-RELATED"/>
    <property type="match status" value="1"/>
</dbReference>
<dbReference type="Pfam" id="PF03746">
    <property type="entry name" value="LamB_YcsF"/>
    <property type="match status" value="1"/>
</dbReference>
<dbReference type="SUPFAM" id="SSF88713">
    <property type="entry name" value="Glycoside hydrolase/deacetylase"/>
    <property type="match status" value="1"/>
</dbReference>
<accession>A8FNK1</accession>
<organism>
    <name type="scientific">Campylobacter jejuni subsp. jejuni serotype O:6 (strain 81116 / NCTC 11828)</name>
    <dbReference type="NCBI Taxonomy" id="407148"/>
    <lineage>
        <taxon>Bacteria</taxon>
        <taxon>Pseudomonadati</taxon>
        <taxon>Campylobacterota</taxon>
        <taxon>Epsilonproteobacteria</taxon>
        <taxon>Campylobacterales</taxon>
        <taxon>Campylobacteraceae</taxon>
        <taxon>Campylobacter</taxon>
    </lineage>
</organism>
<gene>
    <name evidence="1" type="primary">pxpA</name>
    <name type="ordered locus">C8J_1440</name>
</gene>
<keyword id="KW-0067">ATP-binding</keyword>
<keyword id="KW-0378">Hydrolase</keyword>
<keyword id="KW-0547">Nucleotide-binding</keyword>
<feature type="chain" id="PRO_1000072744" description="5-oxoprolinase subunit A">
    <location>
        <begin position="1"/>
        <end position="255"/>
    </location>
</feature>
<evidence type="ECO:0000255" key="1">
    <source>
        <dbReference type="HAMAP-Rule" id="MF_00691"/>
    </source>
</evidence>
<comment type="function">
    <text evidence="1">Catalyzes the cleavage of 5-oxoproline to form L-glutamate coupled to the hydrolysis of ATP to ADP and inorganic phosphate.</text>
</comment>
<comment type="catalytic activity">
    <reaction evidence="1">
        <text>5-oxo-L-proline + ATP + 2 H2O = L-glutamate + ADP + phosphate + H(+)</text>
        <dbReference type="Rhea" id="RHEA:10348"/>
        <dbReference type="ChEBI" id="CHEBI:15377"/>
        <dbReference type="ChEBI" id="CHEBI:15378"/>
        <dbReference type="ChEBI" id="CHEBI:29985"/>
        <dbReference type="ChEBI" id="CHEBI:30616"/>
        <dbReference type="ChEBI" id="CHEBI:43474"/>
        <dbReference type="ChEBI" id="CHEBI:58402"/>
        <dbReference type="ChEBI" id="CHEBI:456216"/>
        <dbReference type="EC" id="3.5.2.9"/>
    </reaction>
</comment>
<comment type="subunit">
    <text evidence="1">Forms a complex composed of PxpA, PxpB and PxpC.</text>
</comment>
<comment type="similarity">
    <text evidence="1">Belongs to the LamB/PxpA family.</text>
</comment>
<reference key="1">
    <citation type="journal article" date="2007" name="J. Bacteriol.">
        <title>The complete genome sequence of Campylobacter jejuni strain 81116 (NCTC11828).</title>
        <authorList>
            <person name="Pearson B.M."/>
            <person name="Gaskin D.J.H."/>
            <person name="Segers R.P.A.M."/>
            <person name="Wells J.M."/>
            <person name="Nuijten P.J.M."/>
            <person name="van Vliet A.H.M."/>
        </authorList>
    </citation>
    <scope>NUCLEOTIDE SEQUENCE [LARGE SCALE GENOMIC DNA]</scope>
    <source>
        <strain>81116 / NCTC 11828</strain>
    </source>
</reference>